<sequence length="275" mass="30576">MGFSSLLTTCRYLLYSGAGNSFILGESMPSLEDVLFLCQEEMVDGFLCVESSEIADAKLTVFNSDGSIASMCGNGLRCAMAHVAQCFGLEDVSIETERGVYQGKFFSMNRVLVDMTLPDWKKAERKLTHVLPGMPEQVFFIDTGVPHVVVFVSDLSKVPVQEWGSFLRYHEDFAPEGVNVDFVQRKKDDLLLVYTYERGCERETLSCGTGMLASALVAADIFSLGQDFSIAVCSRSRNLIKIFSEKGKVFLEGPVSLLNRSENFGWLEPKSRRFG</sequence>
<feature type="chain" id="PRO_1000099226" description="Diaminopimelate epimerase">
    <location>
        <begin position="1"/>
        <end position="275"/>
    </location>
</feature>
<feature type="active site" description="Proton donor" evidence="1">
    <location>
        <position position="72"/>
    </location>
</feature>
<feature type="active site" description="Proton acceptor" evidence="1">
    <location>
        <position position="207"/>
    </location>
</feature>
<feature type="binding site" evidence="1">
    <location>
        <position position="20"/>
    </location>
    <ligand>
        <name>substrate</name>
    </ligand>
</feature>
<feature type="binding site" evidence="1">
    <location>
        <position position="63"/>
    </location>
    <ligand>
        <name>substrate</name>
    </ligand>
</feature>
<feature type="binding site" evidence="1">
    <location>
        <begin position="73"/>
        <end position="74"/>
    </location>
    <ligand>
        <name>substrate</name>
    </ligand>
</feature>
<feature type="binding site" evidence="1">
    <location>
        <position position="179"/>
    </location>
    <ligand>
        <name>substrate</name>
    </ligand>
</feature>
<feature type="binding site" evidence="1">
    <location>
        <begin position="197"/>
        <end position="198"/>
    </location>
    <ligand>
        <name>substrate</name>
    </ligand>
</feature>
<feature type="binding site" evidence="1">
    <location>
        <begin position="208"/>
        <end position="209"/>
    </location>
    <ligand>
        <name>substrate</name>
    </ligand>
</feature>
<feature type="site" description="Could be important to modulate the pK values of the two catalytic cysteine residues" evidence="1">
    <location>
        <position position="147"/>
    </location>
</feature>
<feature type="site" description="Could be important to modulate the pK values of the two catalytic cysteine residues" evidence="1">
    <location>
        <position position="197"/>
    </location>
</feature>
<protein>
    <recommendedName>
        <fullName evidence="1">Diaminopimelate epimerase</fullName>
        <shortName evidence="1">DAP epimerase</shortName>
        <ecNumber evidence="1">5.1.1.7</ecNumber>
    </recommendedName>
    <alternativeName>
        <fullName evidence="1">PLP-independent amino acid racemase</fullName>
    </alternativeName>
</protein>
<name>DAPF_CHLT2</name>
<accession>B0B802</accession>
<gene>
    <name evidence="1" type="primary">dapF</name>
    <name type="ordered locus">CTL0689</name>
</gene>
<keyword id="KW-0028">Amino-acid biosynthesis</keyword>
<keyword id="KW-0963">Cytoplasm</keyword>
<keyword id="KW-0413">Isomerase</keyword>
<keyword id="KW-0457">Lysine biosynthesis</keyword>
<dbReference type="EC" id="5.1.1.7" evidence="1"/>
<dbReference type="EMBL" id="AM884176">
    <property type="protein sequence ID" value="CAP04128.1"/>
    <property type="molecule type" value="Genomic_DNA"/>
</dbReference>
<dbReference type="RefSeq" id="WP_009871784.1">
    <property type="nucleotide sequence ID" value="NC_010287.1"/>
</dbReference>
<dbReference type="RefSeq" id="YP_001654761.1">
    <property type="nucleotide sequence ID" value="NC_010287.1"/>
</dbReference>
<dbReference type="SMR" id="B0B802"/>
<dbReference type="KEGG" id="ctb:CTL0689"/>
<dbReference type="PATRIC" id="fig|471472.4.peg.741"/>
<dbReference type="HOGENOM" id="CLU_053306_3_2_0"/>
<dbReference type="UniPathway" id="UPA00034">
    <property type="reaction ID" value="UER00025"/>
</dbReference>
<dbReference type="Proteomes" id="UP001154402">
    <property type="component" value="Chromosome"/>
</dbReference>
<dbReference type="GO" id="GO:0005829">
    <property type="term" value="C:cytosol"/>
    <property type="evidence" value="ECO:0007669"/>
    <property type="project" value="TreeGrafter"/>
</dbReference>
<dbReference type="GO" id="GO:0008837">
    <property type="term" value="F:diaminopimelate epimerase activity"/>
    <property type="evidence" value="ECO:0007669"/>
    <property type="project" value="UniProtKB-UniRule"/>
</dbReference>
<dbReference type="GO" id="GO:0009089">
    <property type="term" value="P:lysine biosynthetic process via diaminopimelate"/>
    <property type="evidence" value="ECO:0007669"/>
    <property type="project" value="UniProtKB-UniRule"/>
</dbReference>
<dbReference type="FunFam" id="3.10.310.10:FF:000030">
    <property type="entry name" value="Diaminopimelate epimerase"/>
    <property type="match status" value="1"/>
</dbReference>
<dbReference type="Gene3D" id="3.10.310.10">
    <property type="entry name" value="Diaminopimelate Epimerase, Chain A, domain 1"/>
    <property type="match status" value="2"/>
</dbReference>
<dbReference type="HAMAP" id="MF_00197">
    <property type="entry name" value="DAP_epimerase"/>
    <property type="match status" value="1"/>
</dbReference>
<dbReference type="InterPro" id="IPR053407">
    <property type="entry name" value="DAP_Epimerase"/>
</dbReference>
<dbReference type="InterPro" id="IPR018510">
    <property type="entry name" value="DAP_epimerase_AS"/>
</dbReference>
<dbReference type="InterPro" id="IPR001653">
    <property type="entry name" value="DAP_epimerase_DapF"/>
</dbReference>
<dbReference type="NCBIfam" id="NF038284">
    <property type="entry name" value="bifunc_DapF"/>
    <property type="match status" value="1"/>
</dbReference>
<dbReference type="NCBIfam" id="TIGR00652">
    <property type="entry name" value="DapF"/>
    <property type="match status" value="1"/>
</dbReference>
<dbReference type="PANTHER" id="PTHR31689:SF0">
    <property type="entry name" value="DIAMINOPIMELATE EPIMERASE"/>
    <property type="match status" value="1"/>
</dbReference>
<dbReference type="PANTHER" id="PTHR31689">
    <property type="entry name" value="DIAMINOPIMELATE EPIMERASE, CHLOROPLASTIC"/>
    <property type="match status" value="1"/>
</dbReference>
<dbReference type="Pfam" id="PF01678">
    <property type="entry name" value="DAP_epimerase"/>
    <property type="match status" value="2"/>
</dbReference>
<dbReference type="SUPFAM" id="SSF54506">
    <property type="entry name" value="Diaminopimelate epimerase-like"/>
    <property type="match status" value="2"/>
</dbReference>
<dbReference type="PROSITE" id="PS01326">
    <property type="entry name" value="DAP_EPIMERASE"/>
    <property type="match status" value="1"/>
</dbReference>
<organism>
    <name type="scientific">Chlamydia trachomatis serovar L2 (strain ATCC VR-902B / DSM 19102 / 434/Bu)</name>
    <dbReference type="NCBI Taxonomy" id="471472"/>
    <lineage>
        <taxon>Bacteria</taxon>
        <taxon>Pseudomonadati</taxon>
        <taxon>Chlamydiota</taxon>
        <taxon>Chlamydiia</taxon>
        <taxon>Chlamydiales</taxon>
        <taxon>Chlamydiaceae</taxon>
        <taxon>Chlamydia/Chlamydophila group</taxon>
        <taxon>Chlamydia</taxon>
    </lineage>
</organism>
<reference key="1">
    <citation type="journal article" date="2008" name="Genome Res.">
        <title>Chlamydia trachomatis: genome sequence analysis of lymphogranuloma venereum isolates.</title>
        <authorList>
            <person name="Thomson N.R."/>
            <person name="Holden M.T.G."/>
            <person name="Carder C."/>
            <person name="Lennard N."/>
            <person name="Lockey S.J."/>
            <person name="Marsh P."/>
            <person name="Skipp P."/>
            <person name="O'Connor C.D."/>
            <person name="Goodhead I."/>
            <person name="Norbertzcak H."/>
            <person name="Harris B."/>
            <person name="Ormond D."/>
            <person name="Rance R."/>
            <person name="Quail M.A."/>
            <person name="Parkhill J."/>
            <person name="Stephens R.S."/>
            <person name="Clarke I.N."/>
        </authorList>
    </citation>
    <scope>NUCLEOTIDE SEQUENCE [LARGE SCALE GENOMIC DNA]</scope>
    <source>
        <strain>ATCC VR-902B / DSM 19102 / 434/Bu</strain>
    </source>
</reference>
<comment type="function">
    <text evidence="1">Catalyzes the stereoinversion of LL-2,6-diaminopimelate (L,L-DAP) to meso-diaminopimelate (meso-DAP), a precursor of L-lysine and an essential component of the bacterial peptidoglycan.</text>
</comment>
<comment type="catalytic activity">
    <reaction evidence="1">
        <text>(2S,6S)-2,6-diaminopimelate = meso-2,6-diaminopimelate</text>
        <dbReference type="Rhea" id="RHEA:15393"/>
        <dbReference type="ChEBI" id="CHEBI:57609"/>
        <dbReference type="ChEBI" id="CHEBI:57791"/>
        <dbReference type="EC" id="5.1.1.7"/>
    </reaction>
</comment>
<comment type="pathway">
    <text evidence="1">Amino-acid biosynthesis; L-lysine biosynthesis via DAP pathway; DL-2,6-diaminopimelate from LL-2,6-diaminopimelate: step 1/1.</text>
</comment>
<comment type="subunit">
    <text evidence="1">Homodimer.</text>
</comment>
<comment type="subcellular location">
    <subcellularLocation>
        <location evidence="1">Cytoplasm</location>
    </subcellularLocation>
</comment>
<comment type="similarity">
    <text evidence="1">Belongs to the diaminopimelate epimerase family.</text>
</comment>
<evidence type="ECO:0000255" key="1">
    <source>
        <dbReference type="HAMAP-Rule" id="MF_00197"/>
    </source>
</evidence>
<proteinExistence type="inferred from homology"/>